<reference key="1">
    <citation type="journal article" date="1997" name="Biochem. J.">
        <title>From sequence analysis of three novel ascorbate peroxidases from Arabidopsis thaliana to structure, function and evolution of seven types of ascorbate peroxidase.</title>
        <authorList>
            <person name="Jespersen H.M."/>
            <person name="Kjaersgaard I.V.H."/>
            <person name="Oestergaard L."/>
            <person name="Welinder K.G."/>
        </authorList>
    </citation>
    <scope>NUCLEOTIDE SEQUENCE [MRNA]</scope>
    <source>
        <strain>cv. Columbia</strain>
    </source>
</reference>
<reference key="2">
    <citation type="journal article" date="1997" name="Plant Cell">
        <title>Photosynthetic electron transport regulates the expression of cytosolic ascorbate peroxidase genes in Arabidopsis during excess light stress.</title>
        <authorList>
            <person name="Karpinski S."/>
            <person name="Escobar C."/>
            <person name="Karpinski B."/>
            <person name="Creissen G.P."/>
            <person name="Mullineaux P.M."/>
        </authorList>
    </citation>
    <scope>NUCLEOTIDE SEQUENCE [MRNA]</scope>
    <source>
        <strain>cv. Columbia</strain>
    </source>
</reference>
<reference key="3">
    <citation type="journal article" date="1997" name="Plant Mol. Biol.">
        <title>Cloning and expression of an Arabidopsis gene encoding a putative peroxisomal ascorbate peroxidase.</title>
        <authorList>
            <person name="Zhang H."/>
            <person name="Wang J."/>
            <person name="Nickel U."/>
            <person name="Allen R.D."/>
            <person name="Goodman H.M."/>
        </authorList>
    </citation>
    <scope>NUCLEOTIDE SEQUENCE [MRNA]</scope>
</reference>
<reference key="4">
    <citation type="submission" date="1998-05" db="EMBL/GenBank/DDBJ databases">
        <title>Ascorbate peroxidase III gene from Arabidopsis thaliana is regulated by light and development.</title>
        <authorList>
            <person name="Escobar C."/>
            <person name="Bradley D.J."/>
            <person name="Puente P."/>
            <person name="Harberd N."/>
            <person name="Creissen G.P."/>
            <person name="Mullineaux P.M."/>
        </authorList>
    </citation>
    <scope>NUCLEOTIDE SEQUENCE [GENOMIC DNA]</scope>
    <source>
        <strain>cv. Columbia</strain>
    </source>
</reference>
<reference key="5">
    <citation type="journal article" date="1999" name="Nature">
        <title>Sequence and analysis of chromosome 4 of the plant Arabidopsis thaliana.</title>
        <authorList>
            <person name="Mayer K.F.X."/>
            <person name="Schueller C."/>
            <person name="Wambutt R."/>
            <person name="Murphy G."/>
            <person name="Volckaert G."/>
            <person name="Pohl T."/>
            <person name="Duesterhoeft A."/>
            <person name="Stiekema W."/>
            <person name="Entian K.-D."/>
            <person name="Terryn N."/>
            <person name="Harris B."/>
            <person name="Ansorge W."/>
            <person name="Brandt P."/>
            <person name="Grivell L.A."/>
            <person name="Rieger M."/>
            <person name="Weichselgartner M."/>
            <person name="de Simone V."/>
            <person name="Obermaier B."/>
            <person name="Mache R."/>
            <person name="Mueller M."/>
            <person name="Kreis M."/>
            <person name="Delseny M."/>
            <person name="Puigdomenech P."/>
            <person name="Watson M."/>
            <person name="Schmidtheini T."/>
            <person name="Reichert B."/>
            <person name="Portetelle D."/>
            <person name="Perez-Alonso M."/>
            <person name="Boutry M."/>
            <person name="Bancroft I."/>
            <person name="Vos P."/>
            <person name="Hoheisel J."/>
            <person name="Zimmermann W."/>
            <person name="Wedler H."/>
            <person name="Ridley P."/>
            <person name="Langham S.-A."/>
            <person name="McCullagh B."/>
            <person name="Bilham L."/>
            <person name="Robben J."/>
            <person name="van der Schueren J."/>
            <person name="Grymonprez B."/>
            <person name="Chuang Y.-J."/>
            <person name="Vandenbussche F."/>
            <person name="Braeken M."/>
            <person name="Weltjens I."/>
            <person name="Voet M."/>
            <person name="Bastiaens I."/>
            <person name="Aert R."/>
            <person name="Defoor E."/>
            <person name="Weitzenegger T."/>
            <person name="Bothe G."/>
            <person name="Ramsperger U."/>
            <person name="Hilbert H."/>
            <person name="Braun M."/>
            <person name="Holzer E."/>
            <person name="Brandt A."/>
            <person name="Peters S."/>
            <person name="van Staveren M."/>
            <person name="Dirkse W."/>
            <person name="Mooijman P."/>
            <person name="Klein Lankhorst R."/>
            <person name="Rose M."/>
            <person name="Hauf J."/>
            <person name="Koetter P."/>
            <person name="Berneiser S."/>
            <person name="Hempel S."/>
            <person name="Feldpausch M."/>
            <person name="Lamberth S."/>
            <person name="Van den Daele H."/>
            <person name="De Keyser A."/>
            <person name="Buysshaert C."/>
            <person name="Gielen J."/>
            <person name="Villarroel R."/>
            <person name="De Clercq R."/>
            <person name="van Montagu M."/>
            <person name="Rogers J."/>
            <person name="Cronin A."/>
            <person name="Quail M.A."/>
            <person name="Bray-Allen S."/>
            <person name="Clark L."/>
            <person name="Doggett J."/>
            <person name="Hall S."/>
            <person name="Kay M."/>
            <person name="Lennard N."/>
            <person name="McLay K."/>
            <person name="Mayes R."/>
            <person name="Pettett A."/>
            <person name="Rajandream M.A."/>
            <person name="Lyne M."/>
            <person name="Benes V."/>
            <person name="Rechmann S."/>
            <person name="Borkova D."/>
            <person name="Bloecker H."/>
            <person name="Scharfe M."/>
            <person name="Grimm M."/>
            <person name="Loehnert T.-H."/>
            <person name="Dose S."/>
            <person name="de Haan M."/>
            <person name="Maarse A.C."/>
            <person name="Schaefer M."/>
            <person name="Mueller-Auer S."/>
            <person name="Gabel C."/>
            <person name="Fuchs M."/>
            <person name="Fartmann B."/>
            <person name="Granderath K."/>
            <person name="Dauner D."/>
            <person name="Herzl A."/>
            <person name="Neumann S."/>
            <person name="Argiriou A."/>
            <person name="Vitale D."/>
            <person name="Liguori R."/>
            <person name="Piravandi E."/>
            <person name="Massenet O."/>
            <person name="Quigley F."/>
            <person name="Clabauld G."/>
            <person name="Muendlein A."/>
            <person name="Felber R."/>
            <person name="Schnabl S."/>
            <person name="Hiller R."/>
            <person name="Schmidt W."/>
            <person name="Lecharny A."/>
            <person name="Aubourg S."/>
            <person name="Chefdor F."/>
            <person name="Cooke R."/>
            <person name="Berger C."/>
            <person name="Monfort A."/>
            <person name="Casacuberta E."/>
            <person name="Gibbons T."/>
            <person name="Weber N."/>
            <person name="Vandenbol M."/>
            <person name="Bargues M."/>
            <person name="Terol J."/>
            <person name="Torres A."/>
            <person name="Perez-Perez A."/>
            <person name="Purnelle B."/>
            <person name="Bent E."/>
            <person name="Johnson S."/>
            <person name="Tacon D."/>
            <person name="Jesse T."/>
            <person name="Heijnen L."/>
            <person name="Schwarz S."/>
            <person name="Scholler P."/>
            <person name="Heber S."/>
            <person name="Francs P."/>
            <person name="Bielke C."/>
            <person name="Frishman D."/>
            <person name="Haase D."/>
            <person name="Lemcke K."/>
            <person name="Mewes H.-W."/>
            <person name="Stocker S."/>
            <person name="Zaccaria P."/>
            <person name="Bevan M."/>
            <person name="Wilson R.K."/>
            <person name="de la Bastide M."/>
            <person name="Habermann K."/>
            <person name="Parnell L."/>
            <person name="Dedhia N."/>
            <person name="Gnoj L."/>
            <person name="Schutz K."/>
            <person name="Huang E."/>
            <person name="Spiegel L."/>
            <person name="Sekhon M."/>
            <person name="Murray J."/>
            <person name="Sheet P."/>
            <person name="Cordes M."/>
            <person name="Abu-Threideh J."/>
            <person name="Stoneking T."/>
            <person name="Kalicki J."/>
            <person name="Graves T."/>
            <person name="Harmon G."/>
            <person name="Edwards J."/>
            <person name="Latreille P."/>
            <person name="Courtney L."/>
            <person name="Cloud J."/>
            <person name="Abbott A."/>
            <person name="Scott K."/>
            <person name="Johnson D."/>
            <person name="Minx P."/>
            <person name="Bentley D."/>
            <person name="Fulton B."/>
            <person name="Miller N."/>
            <person name="Greco T."/>
            <person name="Kemp K."/>
            <person name="Kramer J."/>
            <person name="Fulton L."/>
            <person name="Mardis E."/>
            <person name="Dante M."/>
            <person name="Pepin K."/>
            <person name="Hillier L.W."/>
            <person name="Nelson J."/>
            <person name="Spieth J."/>
            <person name="Ryan E."/>
            <person name="Andrews S."/>
            <person name="Geisel C."/>
            <person name="Layman D."/>
            <person name="Du H."/>
            <person name="Ali J."/>
            <person name="Berghoff A."/>
            <person name="Jones K."/>
            <person name="Drone K."/>
            <person name="Cotton M."/>
            <person name="Joshu C."/>
            <person name="Antonoiu B."/>
            <person name="Zidanic M."/>
            <person name="Strong C."/>
            <person name="Sun H."/>
            <person name="Lamar B."/>
            <person name="Yordan C."/>
            <person name="Ma P."/>
            <person name="Zhong J."/>
            <person name="Preston R."/>
            <person name="Vil D."/>
            <person name="Shekher M."/>
            <person name="Matero A."/>
            <person name="Shah R."/>
            <person name="Swaby I.K."/>
            <person name="O'Shaughnessy A."/>
            <person name="Rodriguez M."/>
            <person name="Hoffman J."/>
            <person name="Till S."/>
            <person name="Granat S."/>
            <person name="Shohdy N."/>
            <person name="Hasegawa A."/>
            <person name="Hameed A."/>
            <person name="Lodhi M."/>
            <person name="Johnson A."/>
            <person name="Chen E."/>
            <person name="Marra M.A."/>
            <person name="Martienssen R."/>
            <person name="McCombie W.R."/>
        </authorList>
    </citation>
    <scope>NUCLEOTIDE SEQUENCE [LARGE SCALE GENOMIC DNA]</scope>
    <source>
        <strain>cv. Columbia</strain>
    </source>
</reference>
<reference key="6">
    <citation type="journal article" date="2017" name="Plant J.">
        <title>Araport11: a complete reannotation of the Arabidopsis thaliana reference genome.</title>
        <authorList>
            <person name="Cheng C.Y."/>
            <person name="Krishnakumar V."/>
            <person name="Chan A.P."/>
            <person name="Thibaud-Nissen F."/>
            <person name="Schobel S."/>
            <person name="Town C.D."/>
        </authorList>
    </citation>
    <scope>GENOME REANNOTATION</scope>
    <source>
        <strain>cv. Columbia</strain>
    </source>
</reference>
<reference key="7">
    <citation type="journal article" date="2003" name="Science">
        <title>Empirical analysis of transcriptional activity in the Arabidopsis genome.</title>
        <authorList>
            <person name="Yamada K."/>
            <person name="Lim J."/>
            <person name="Dale J.M."/>
            <person name="Chen H."/>
            <person name="Shinn P."/>
            <person name="Palm C.J."/>
            <person name="Southwick A.M."/>
            <person name="Wu H.C."/>
            <person name="Kim C.J."/>
            <person name="Nguyen M."/>
            <person name="Pham P.K."/>
            <person name="Cheuk R.F."/>
            <person name="Karlin-Newmann G."/>
            <person name="Liu S.X."/>
            <person name="Lam B."/>
            <person name="Sakano H."/>
            <person name="Wu T."/>
            <person name="Yu G."/>
            <person name="Miranda M."/>
            <person name="Quach H.L."/>
            <person name="Tripp M."/>
            <person name="Chang C.H."/>
            <person name="Lee J.M."/>
            <person name="Toriumi M.J."/>
            <person name="Chan M.M."/>
            <person name="Tang C.C."/>
            <person name="Onodera C.S."/>
            <person name="Deng J.M."/>
            <person name="Akiyama K."/>
            <person name="Ansari Y."/>
            <person name="Arakawa T."/>
            <person name="Banh J."/>
            <person name="Banno F."/>
            <person name="Bowser L."/>
            <person name="Brooks S.Y."/>
            <person name="Carninci P."/>
            <person name="Chao Q."/>
            <person name="Choy N."/>
            <person name="Enju A."/>
            <person name="Goldsmith A.D."/>
            <person name="Gurjal M."/>
            <person name="Hansen N.F."/>
            <person name="Hayashizaki Y."/>
            <person name="Johnson-Hopson C."/>
            <person name="Hsuan V.W."/>
            <person name="Iida K."/>
            <person name="Karnes M."/>
            <person name="Khan S."/>
            <person name="Koesema E."/>
            <person name="Ishida J."/>
            <person name="Jiang P.X."/>
            <person name="Jones T."/>
            <person name="Kawai J."/>
            <person name="Kamiya A."/>
            <person name="Meyers C."/>
            <person name="Nakajima M."/>
            <person name="Narusaka M."/>
            <person name="Seki M."/>
            <person name="Sakurai T."/>
            <person name="Satou M."/>
            <person name="Tamse R."/>
            <person name="Vaysberg M."/>
            <person name="Wallender E.K."/>
            <person name="Wong C."/>
            <person name="Yamamura Y."/>
            <person name="Yuan S."/>
            <person name="Shinozaki K."/>
            <person name="Davis R.W."/>
            <person name="Theologis A."/>
            <person name="Ecker J.R."/>
        </authorList>
    </citation>
    <scope>NUCLEOTIDE SEQUENCE [LARGE SCALE MRNA]</scope>
    <source>
        <strain>cv. Columbia</strain>
    </source>
</reference>
<reference key="8">
    <citation type="submission" date="2002-03" db="EMBL/GenBank/DDBJ databases">
        <title>Full-length cDNA from Arabidopsis thaliana.</title>
        <authorList>
            <person name="Brover V.V."/>
            <person name="Troukhan M.E."/>
            <person name="Alexandrov N.A."/>
            <person name="Lu Y.-P."/>
            <person name="Flavell R.B."/>
            <person name="Feldmann K.A."/>
        </authorList>
    </citation>
    <scope>NUCLEOTIDE SEQUENCE [LARGE SCALE MRNA]</scope>
</reference>
<reference key="9">
    <citation type="journal article" date="2006" name="J. Exp. Bot.">
        <title>The Arabidopsis ascorbate peroxidase 3 is a peroxisomal membrane-bound antioxidant enzyme and is dispensable for Arabidopsis growth and development.</title>
        <authorList>
            <person name="Narendra S."/>
            <person name="Venkataramani S."/>
            <person name="Shen G."/>
            <person name="Wang J."/>
            <person name="Pasapula V."/>
            <person name="Lin Y."/>
            <person name="Kornyeyev D."/>
            <person name="Holaday A.S."/>
            <person name="Zhang H."/>
        </authorList>
    </citation>
    <scope>SUBCELLULAR LOCATION</scope>
</reference>
<reference key="10">
    <citation type="journal article" date="2007" name="Plant Cell">
        <title>Proteome analysis of Arabidopsis leaf peroxisomes reveals novel targeting peptides, metabolic pathways, and defense mechanisms.</title>
        <authorList>
            <person name="Reumann S."/>
            <person name="Babujee L."/>
            <person name="Ma C."/>
            <person name="Wienkoop S."/>
            <person name="Siemsen T."/>
            <person name="Antonicelli G.E."/>
            <person name="Rasche N."/>
            <person name="Lueder F."/>
            <person name="Weckwerth W."/>
            <person name="Jahn O."/>
        </authorList>
    </citation>
    <scope>IDENTIFICATION BY MASS SPECTROMETRY</scope>
</reference>
<reference key="11">
    <citation type="journal article" date="2010" name="Plant Cell">
        <title>ANKYRIN REPEAT-CONTAINING PROTEIN 2A is an essential molecular chaperone for peroxisomal membrane-bound ASCORBATE PEROXIDASE3 in Arabidopsis.</title>
        <authorList>
            <person name="Shen G."/>
            <person name="Kuppu S."/>
            <person name="Venkataramani S."/>
            <person name="Wang J."/>
            <person name="Yan J."/>
            <person name="Qiu X."/>
            <person name="Zhang H."/>
        </authorList>
    </citation>
    <scope>SUBCELLULAR LOCATION</scope>
    <scope>INTERACTION WITH AKR2A AND AKR2B</scope>
    <scope>AKR2A-BINDING SEQUENCE</scope>
    <scope>DOMAIN</scope>
    <source>
        <strain>cv. C24</strain>
        <strain>cv. Columbia</strain>
    </source>
</reference>
<reference key="12">
    <citation type="journal article" date="2010" name="Plant Signal. Behav.">
        <title>Is AKR2A an essential molecular chaperone for a class of membrane-bound proteins in plants?</title>
        <authorList>
            <person name="Zhang H."/>
            <person name="Li X."/>
            <person name="Zhang Y."/>
            <person name="Kuppu S."/>
            <person name="Shen G."/>
        </authorList>
    </citation>
    <scope>AKR2A-BINDING SEQUENCE</scope>
    <scope>INTERACTION WITH AKR2A</scope>
    <scope>REVIEW</scope>
</reference>
<reference key="13">
    <citation type="journal article" date="2012" name="Mol. Cell. Proteomics">
        <title>Comparative large-scale characterisation of plant vs. mammal proteins reveals similar and idiosyncratic N-alpha acetylation features.</title>
        <authorList>
            <person name="Bienvenut W.V."/>
            <person name="Sumpton D."/>
            <person name="Martinez A."/>
            <person name="Lilla S."/>
            <person name="Espagne C."/>
            <person name="Meinnel T."/>
            <person name="Giglione C."/>
        </authorList>
    </citation>
    <scope>ACETYLATION [LARGE SCALE ANALYSIS] AT ALA-2</scope>
    <scope>CLEAVAGE OF INITIATOR METHIONINE [LARGE SCALE ANALYSIS]</scope>
    <scope>IDENTIFICATION BY MASS SPECTROMETRY [LARGE SCALE ANALYSIS]</scope>
</reference>
<sequence length="287" mass="31572">MAAPIVDAEYLKEITKARRELRSLIANKNCAPIMLRLAWHDAGTYDAQSKTGGPNGSIRNEEEHTHGANSGLKIALDLCEGVKAKHPKITYADLYQLAGVVAVEVTGGPDIVFVPGRKDSNVCPKEGRLPDAKQGFQHLRDVFYRMGLSDKDIVALSGGHTLGRAHPERSGFDGPWTQEPLKFDNSYFVELLKGESEGLLKLPTDKTLLEDPEFRRLVELYAKDEDAFFRDYAESHKKLSELGFNPNSSAGKAVADSTILAQSAFGVAVAAAVVAFGYFYEIRKRMK</sequence>
<organism>
    <name type="scientific">Arabidopsis thaliana</name>
    <name type="common">Mouse-ear cress</name>
    <dbReference type="NCBI Taxonomy" id="3702"/>
    <lineage>
        <taxon>Eukaryota</taxon>
        <taxon>Viridiplantae</taxon>
        <taxon>Streptophyta</taxon>
        <taxon>Embryophyta</taxon>
        <taxon>Tracheophyta</taxon>
        <taxon>Spermatophyta</taxon>
        <taxon>Magnoliopsida</taxon>
        <taxon>eudicotyledons</taxon>
        <taxon>Gunneridae</taxon>
        <taxon>Pentapetalae</taxon>
        <taxon>rosids</taxon>
        <taxon>malvids</taxon>
        <taxon>Brassicales</taxon>
        <taxon>Brassicaceae</taxon>
        <taxon>Camelineae</taxon>
        <taxon>Arabidopsis</taxon>
    </lineage>
</organism>
<gene>
    <name type="primary">APX3</name>
    <name type="synonym">APX</name>
    <name type="synonym">APXIII</name>
    <name type="ordered locus">At4g35000</name>
    <name type="ORF">M4E13.60</name>
</gene>
<evidence type="ECO:0000250" key="1"/>
<evidence type="ECO:0000255" key="2"/>
<evidence type="ECO:0000255" key="3">
    <source>
        <dbReference type="PROSITE-ProRule" id="PRU00297"/>
    </source>
</evidence>
<evidence type="ECO:0000255" key="4">
    <source>
        <dbReference type="PROSITE-ProRule" id="PRU10012"/>
    </source>
</evidence>
<evidence type="ECO:0000256" key="5">
    <source>
        <dbReference type="SAM" id="MobiDB-lite"/>
    </source>
</evidence>
<evidence type="ECO:0000269" key="6">
    <source>
    </source>
</evidence>
<evidence type="ECO:0000269" key="7">
    <source>
    </source>
</evidence>
<evidence type="ECO:0000269" key="8">
    <source>
    </source>
</evidence>
<evidence type="ECO:0000305" key="9"/>
<evidence type="ECO:0007744" key="10">
    <source>
    </source>
</evidence>
<protein>
    <recommendedName>
        <fullName>L-ascorbate peroxidase 3</fullName>
        <shortName>AtAPx03</shortName>
        <ecNumber>1.11.1.11</ecNumber>
    </recommendedName>
</protein>
<feature type="initiator methionine" description="Removed" evidence="10">
    <location>
        <position position="1"/>
    </location>
</feature>
<feature type="chain" id="PRO_0000261323" description="L-ascorbate peroxidase 3">
    <location>
        <begin position="2"/>
        <end position="287"/>
    </location>
</feature>
<feature type="transmembrane region" description="Helical" evidence="2">
    <location>
        <begin position="259"/>
        <end position="279"/>
    </location>
</feature>
<feature type="region of interest" description="Disordered" evidence="5">
    <location>
        <begin position="46"/>
        <end position="66"/>
    </location>
</feature>
<feature type="short sequence motif" description="AKR2A-binding sequence (ABS) required for peroxisome membrane targeting" evidence="7">
    <location>
        <begin position="281"/>
        <end position="287"/>
    </location>
</feature>
<feature type="active site" description="Proton acceptor" evidence="3 4">
    <location>
        <position position="40"/>
    </location>
</feature>
<feature type="binding site" description="axial binding residue" evidence="3">
    <location>
        <position position="160"/>
    </location>
    <ligand>
        <name>heme b</name>
        <dbReference type="ChEBI" id="CHEBI:60344"/>
    </ligand>
    <ligandPart>
        <name>Fe</name>
        <dbReference type="ChEBI" id="CHEBI:18248"/>
    </ligandPart>
</feature>
<feature type="binding site" evidence="1">
    <location>
        <position position="161"/>
    </location>
    <ligand>
        <name>K(+)</name>
        <dbReference type="ChEBI" id="CHEBI:29103"/>
    </ligand>
</feature>
<feature type="binding site" evidence="1">
    <location>
        <position position="177"/>
    </location>
    <ligand>
        <name>K(+)</name>
        <dbReference type="ChEBI" id="CHEBI:29103"/>
    </ligand>
</feature>
<feature type="binding site" evidence="1">
    <location>
        <position position="184"/>
    </location>
    <ligand>
        <name>K(+)</name>
        <dbReference type="ChEBI" id="CHEBI:29103"/>
    </ligand>
</feature>
<feature type="site" description="Transition state stabilizer" evidence="3">
    <location>
        <position position="36"/>
    </location>
</feature>
<feature type="modified residue" description="N-acetylalanine" evidence="10">
    <location>
        <position position="2"/>
    </location>
</feature>
<feature type="sequence conflict" description="In Ref. 4; CAA06823." evidence="9" ref="4">
    <original>K</original>
    <variation>N</variation>
    <location>
        <position position="182"/>
    </location>
</feature>
<feature type="sequence conflict" description="In Ref. 4; CAA06823." evidence="9" ref="4">
    <original>V</original>
    <variation>VR</variation>
    <location>
        <position position="189"/>
    </location>
</feature>
<feature type="sequence conflict" description="In Ref. 4; CAA06823." evidence="9" ref="4">
    <location>
        <position position="223"/>
    </location>
</feature>
<accession>Q42564</accession>
<accession>O81810</accession>
<keyword id="KW-0007">Acetylation</keyword>
<keyword id="KW-0106">Calcium</keyword>
<keyword id="KW-0330">Glyoxysome</keyword>
<keyword id="KW-0349">Heme</keyword>
<keyword id="KW-0376">Hydrogen peroxide</keyword>
<keyword id="KW-0408">Iron</keyword>
<keyword id="KW-0472">Membrane</keyword>
<keyword id="KW-0479">Metal-binding</keyword>
<keyword id="KW-0560">Oxidoreductase</keyword>
<keyword id="KW-0575">Peroxidase</keyword>
<keyword id="KW-0576">Peroxisome</keyword>
<keyword id="KW-0630">Potassium</keyword>
<keyword id="KW-1185">Reference proteome</keyword>
<keyword id="KW-0812">Transmembrane</keyword>
<keyword id="KW-1133">Transmembrane helix</keyword>
<proteinExistence type="evidence at protein level"/>
<dbReference type="EC" id="1.11.1.11"/>
<dbReference type="EMBL" id="X98003">
    <property type="protein sequence ID" value="CAA66640.1"/>
    <property type="molecule type" value="mRNA"/>
</dbReference>
<dbReference type="EMBL" id="X98276">
    <property type="protein sequence ID" value="CAA66926.1"/>
    <property type="molecule type" value="mRNA"/>
</dbReference>
<dbReference type="EMBL" id="U69138">
    <property type="protein sequence ID" value="AAB71493.1"/>
    <property type="molecule type" value="mRNA"/>
</dbReference>
<dbReference type="EMBL" id="AJ006030">
    <property type="protein sequence ID" value="CAA06823.1"/>
    <property type="molecule type" value="Genomic_DNA"/>
</dbReference>
<dbReference type="EMBL" id="AL022023">
    <property type="protein sequence ID" value="CAA17765.1"/>
    <property type="molecule type" value="Genomic_DNA"/>
</dbReference>
<dbReference type="EMBL" id="AL161586">
    <property type="protein sequence ID" value="CAB80217.1"/>
    <property type="molecule type" value="Genomic_DNA"/>
</dbReference>
<dbReference type="EMBL" id="CP002687">
    <property type="protein sequence ID" value="AEE86445.1"/>
    <property type="molecule type" value="Genomic_DNA"/>
</dbReference>
<dbReference type="EMBL" id="AY065143">
    <property type="protein sequence ID" value="AAL38319.1"/>
    <property type="molecule type" value="mRNA"/>
</dbReference>
<dbReference type="EMBL" id="AY081646">
    <property type="protein sequence ID" value="AAM10208.1"/>
    <property type="molecule type" value="mRNA"/>
</dbReference>
<dbReference type="EMBL" id="AY086162">
    <property type="protein sequence ID" value="AAM63367.1"/>
    <property type="molecule type" value="mRNA"/>
</dbReference>
<dbReference type="PIR" id="S71279">
    <property type="entry name" value="S71279"/>
</dbReference>
<dbReference type="RefSeq" id="NP_195226.1">
    <property type="nucleotide sequence ID" value="NM_119666.4"/>
</dbReference>
<dbReference type="SMR" id="Q42564"/>
<dbReference type="BioGRID" id="14934">
    <property type="interactions" value="3"/>
</dbReference>
<dbReference type="FunCoup" id="Q42564">
    <property type="interactions" value="1712"/>
</dbReference>
<dbReference type="STRING" id="3702.Q42564"/>
<dbReference type="PeroxiBase" id="1891">
    <property type="entry name" value="AtAPx03"/>
</dbReference>
<dbReference type="iPTMnet" id="Q42564"/>
<dbReference type="PaxDb" id="3702-AT4G35000.1"/>
<dbReference type="ProteomicsDB" id="241020"/>
<dbReference type="EnsemblPlants" id="AT4G35000.1">
    <property type="protein sequence ID" value="AT4G35000.1"/>
    <property type="gene ID" value="AT4G35000"/>
</dbReference>
<dbReference type="GeneID" id="829652"/>
<dbReference type="Gramene" id="AT4G35000.1">
    <property type="protein sequence ID" value="AT4G35000.1"/>
    <property type="gene ID" value="AT4G35000"/>
</dbReference>
<dbReference type="KEGG" id="ath:AT4G35000"/>
<dbReference type="Araport" id="AT4G35000"/>
<dbReference type="TAIR" id="AT4G35000">
    <property type="gene designation" value="APX3"/>
</dbReference>
<dbReference type="eggNOG" id="ENOG502QR1E">
    <property type="taxonomic scope" value="Eukaryota"/>
</dbReference>
<dbReference type="HOGENOM" id="CLU_036959_3_0_1"/>
<dbReference type="InParanoid" id="Q42564"/>
<dbReference type="OMA" id="GAWVNNP"/>
<dbReference type="OrthoDB" id="2859658at2759"/>
<dbReference type="PhylomeDB" id="Q42564"/>
<dbReference type="BioCyc" id="ARA:AT4G35000-MONOMER"/>
<dbReference type="CD-CODE" id="4299E36E">
    <property type="entry name" value="Nucleolus"/>
</dbReference>
<dbReference type="PRO" id="PR:Q42564"/>
<dbReference type="Proteomes" id="UP000006548">
    <property type="component" value="Chromosome 4"/>
</dbReference>
<dbReference type="ExpressionAtlas" id="Q42564">
    <property type="expression patterns" value="baseline and differential"/>
</dbReference>
<dbReference type="GO" id="GO:0009507">
    <property type="term" value="C:chloroplast"/>
    <property type="evidence" value="ECO:0007005"/>
    <property type="project" value="TAIR"/>
</dbReference>
<dbReference type="GO" id="GO:0009941">
    <property type="term" value="C:chloroplast envelope"/>
    <property type="evidence" value="ECO:0007005"/>
    <property type="project" value="TAIR"/>
</dbReference>
<dbReference type="GO" id="GO:0046861">
    <property type="term" value="C:glyoxysomal membrane"/>
    <property type="evidence" value="ECO:0007669"/>
    <property type="project" value="UniProtKB-SubCell"/>
</dbReference>
<dbReference type="GO" id="GO:0005739">
    <property type="term" value="C:mitochondrion"/>
    <property type="evidence" value="ECO:0007005"/>
    <property type="project" value="TAIR"/>
</dbReference>
<dbReference type="GO" id="GO:0005778">
    <property type="term" value="C:peroxisomal membrane"/>
    <property type="evidence" value="ECO:0000250"/>
    <property type="project" value="TAIR"/>
</dbReference>
<dbReference type="GO" id="GO:0005777">
    <property type="term" value="C:peroxisome"/>
    <property type="evidence" value="ECO:0000314"/>
    <property type="project" value="UniProtKB"/>
</dbReference>
<dbReference type="GO" id="GO:0000325">
    <property type="term" value="C:plant-type vacuole"/>
    <property type="evidence" value="ECO:0007005"/>
    <property type="project" value="TAIR"/>
</dbReference>
<dbReference type="GO" id="GO:0005886">
    <property type="term" value="C:plasma membrane"/>
    <property type="evidence" value="ECO:0007005"/>
    <property type="project" value="TAIR"/>
</dbReference>
<dbReference type="GO" id="GO:0009506">
    <property type="term" value="C:plasmodesma"/>
    <property type="evidence" value="ECO:0007005"/>
    <property type="project" value="TAIR"/>
</dbReference>
<dbReference type="GO" id="GO:0009536">
    <property type="term" value="C:plastid"/>
    <property type="evidence" value="ECO:0007005"/>
    <property type="project" value="TAIR"/>
</dbReference>
<dbReference type="GO" id="GO:0005773">
    <property type="term" value="C:vacuole"/>
    <property type="evidence" value="ECO:0007005"/>
    <property type="project" value="TAIR"/>
</dbReference>
<dbReference type="GO" id="GO:0020037">
    <property type="term" value="F:heme binding"/>
    <property type="evidence" value="ECO:0007669"/>
    <property type="project" value="InterPro"/>
</dbReference>
<dbReference type="GO" id="GO:0016688">
    <property type="term" value="F:L-ascorbate peroxidase activity"/>
    <property type="evidence" value="ECO:0000250"/>
    <property type="project" value="TAIR"/>
</dbReference>
<dbReference type="GO" id="GO:0046872">
    <property type="term" value="F:metal ion binding"/>
    <property type="evidence" value="ECO:0007669"/>
    <property type="project" value="UniProtKB-KW"/>
</dbReference>
<dbReference type="GO" id="GO:0034599">
    <property type="term" value="P:cellular response to oxidative stress"/>
    <property type="evidence" value="ECO:0007669"/>
    <property type="project" value="InterPro"/>
</dbReference>
<dbReference type="GO" id="GO:0042744">
    <property type="term" value="P:hydrogen peroxide catabolic process"/>
    <property type="evidence" value="ECO:0007669"/>
    <property type="project" value="UniProtKB-KW"/>
</dbReference>
<dbReference type="GO" id="GO:0006979">
    <property type="term" value="P:response to oxidative stress"/>
    <property type="evidence" value="ECO:0000315"/>
    <property type="project" value="TAIR"/>
</dbReference>
<dbReference type="CDD" id="cd00691">
    <property type="entry name" value="ascorbate_peroxidase"/>
    <property type="match status" value="1"/>
</dbReference>
<dbReference type="FunFam" id="1.10.520.10:FF:000003">
    <property type="entry name" value="Cytosolic ascorbate peroxidase"/>
    <property type="match status" value="1"/>
</dbReference>
<dbReference type="FunFam" id="1.10.420.10:FF:000003">
    <property type="entry name" value="L-ascorbate peroxidase, cytosolic"/>
    <property type="match status" value="1"/>
</dbReference>
<dbReference type="Gene3D" id="1.10.520.10">
    <property type="match status" value="1"/>
</dbReference>
<dbReference type="Gene3D" id="1.10.420.10">
    <property type="entry name" value="Peroxidase, domain 2"/>
    <property type="match status" value="1"/>
</dbReference>
<dbReference type="InterPro" id="IPR044831">
    <property type="entry name" value="Ccp1-like"/>
</dbReference>
<dbReference type="InterPro" id="IPR002016">
    <property type="entry name" value="Haem_peroxidase"/>
</dbReference>
<dbReference type="InterPro" id="IPR010255">
    <property type="entry name" value="Haem_peroxidase_sf"/>
</dbReference>
<dbReference type="InterPro" id="IPR002207">
    <property type="entry name" value="Peroxidase_I"/>
</dbReference>
<dbReference type="InterPro" id="IPR019794">
    <property type="entry name" value="Peroxidases_AS"/>
</dbReference>
<dbReference type="InterPro" id="IPR019793">
    <property type="entry name" value="Peroxidases_heam-ligand_BS"/>
</dbReference>
<dbReference type="PANTHER" id="PTHR31356:SF36">
    <property type="entry name" value="L-ASCORBATE PEROXIDASE 3"/>
    <property type="match status" value="1"/>
</dbReference>
<dbReference type="PANTHER" id="PTHR31356">
    <property type="entry name" value="THYLAKOID LUMENAL 29 KDA PROTEIN, CHLOROPLASTIC-RELATED"/>
    <property type="match status" value="1"/>
</dbReference>
<dbReference type="Pfam" id="PF00141">
    <property type="entry name" value="peroxidase"/>
    <property type="match status" value="1"/>
</dbReference>
<dbReference type="PRINTS" id="PR00459">
    <property type="entry name" value="ASPEROXIDASE"/>
</dbReference>
<dbReference type="PRINTS" id="PR00458">
    <property type="entry name" value="PEROXIDASE"/>
</dbReference>
<dbReference type="SUPFAM" id="SSF48113">
    <property type="entry name" value="Heme-dependent peroxidases"/>
    <property type="match status" value="1"/>
</dbReference>
<dbReference type="PROSITE" id="PS00435">
    <property type="entry name" value="PEROXIDASE_1"/>
    <property type="match status" value="1"/>
</dbReference>
<dbReference type="PROSITE" id="PS00436">
    <property type="entry name" value="PEROXIDASE_2"/>
    <property type="match status" value="1"/>
</dbReference>
<dbReference type="PROSITE" id="PS50873">
    <property type="entry name" value="PEROXIDASE_4"/>
    <property type="match status" value="1"/>
</dbReference>
<name>APX3_ARATH</name>
<comment type="function">
    <text evidence="1">Plays a key role in hydrogen peroxide removal.</text>
</comment>
<comment type="catalytic activity">
    <reaction>
        <text>L-ascorbate + H2O2 = L-dehydroascorbate + 2 H2O</text>
        <dbReference type="Rhea" id="RHEA:22996"/>
        <dbReference type="ChEBI" id="CHEBI:15377"/>
        <dbReference type="ChEBI" id="CHEBI:16240"/>
        <dbReference type="ChEBI" id="CHEBI:38290"/>
        <dbReference type="ChEBI" id="CHEBI:58539"/>
        <dbReference type="EC" id="1.11.1.11"/>
    </reaction>
</comment>
<comment type="cofactor">
    <cofactor>
        <name>heme b</name>
        <dbReference type="ChEBI" id="CHEBI:60344"/>
    </cofactor>
    <text>Binds 1 heme b (iron(II)-protoporphyrin IX) group per subunit.</text>
</comment>
<comment type="subunit">
    <text evidence="7 8">Interacts via its C-terminal region with AKR2A and AKR2B.</text>
</comment>
<comment type="subcellular location">
    <subcellularLocation>
        <location evidence="6 7">Peroxisome membrane</location>
        <topology evidence="6">Single-pass membrane protein</topology>
    </subcellularLocation>
    <subcellularLocation>
        <location evidence="6">Glyoxysome membrane</location>
        <topology evidence="6">Single-pass membrane protein</topology>
    </subcellularLocation>
</comment>
<comment type="domain">
    <text evidence="7">The transmembrane plays critical roles in migration to the peroxisome and/or subsequent insertion into the membrane.</text>
</comment>
<comment type="miscellaneous">
    <text evidence="1">Binds one cation per subunit; probably K(+), but might also be Ca(2+).</text>
</comment>
<comment type="similarity">
    <text evidence="9">Belongs to the peroxidase family. Ascorbate peroxidase subfamily.</text>
</comment>